<organism>
    <name type="scientific">Vibrio campbellii (strain ATCC BAA-1116)</name>
    <dbReference type="NCBI Taxonomy" id="2902295"/>
    <lineage>
        <taxon>Bacteria</taxon>
        <taxon>Pseudomonadati</taxon>
        <taxon>Pseudomonadota</taxon>
        <taxon>Gammaproteobacteria</taxon>
        <taxon>Vibrionales</taxon>
        <taxon>Vibrionaceae</taxon>
        <taxon>Vibrio</taxon>
    </lineage>
</organism>
<proteinExistence type="inferred from homology"/>
<keyword id="KW-0963">Cytoplasm</keyword>
<keyword id="KW-0690">Ribosome biogenesis</keyword>
<protein>
    <recommendedName>
        <fullName evidence="1">Ribosome-binding factor A</fullName>
    </recommendedName>
</protein>
<dbReference type="EMBL" id="CP000789">
    <property type="protein sequence ID" value="ABU72342.1"/>
    <property type="status" value="ALT_INIT"/>
    <property type="molecule type" value="Genomic_DNA"/>
</dbReference>
<dbReference type="RefSeq" id="WP_005431935.1">
    <property type="nucleotide sequence ID" value="NC_022269.1"/>
</dbReference>
<dbReference type="SMR" id="A7MZI4"/>
<dbReference type="GeneID" id="67376385"/>
<dbReference type="KEGG" id="vha:VIBHAR_03395"/>
<dbReference type="PATRIC" id="fig|338187.25.peg.2801"/>
<dbReference type="Proteomes" id="UP000008152">
    <property type="component" value="Chromosome I"/>
</dbReference>
<dbReference type="GO" id="GO:0005829">
    <property type="term" value="C:cytosol"/>
    <property type="evidence" value="ECO:0007669"/>
    <property type="project" value="TreeGrafter"/>
</dbReference>
<dbReference type="GO" id="GO:0043024">
    <property type="term" value="F:ribosomal small subunit binding"/>
    <property type="evidence" value="ECO:0007669"/>
    <property type="project" value="TreeGrafter"/>
</dbReference>
<dbReference type="GO" id="GO:0030490">
    <property type="term" value="P:maturation of SSU-rRNA"/>
    <property type="evidence" value="ECO:0007669"/>
    <property type="project" value="UniProtKB-UniRule"/>
</dbReference>
<dbReference type="FunFam" id="3.30.300.20:FF:000007">
    <property type="entry name" value="Ribosome-binding factor A"/>
    <property type="match status" value="1"/>
</dbReference>
<dbReference type="Gene3D" id="3.30.300.20">
    <property type="match status" value="1"/>
</dbReference>
<dbReference type="HAMAP" id="MF_00003">
    <property type="entry name" value="RbfA"/>
    <property type="match status" value="1"/>
</dbReference>
<dbReference type="InterPro" id="IPR015946">
    <property type="entry name" value="KH_dom-like_a/b"/>
</dbReference>
<dbReference type="InterPro" id="IPR000238">
    <property type="entry name" value="RbfA"/>
</dbReference>
<dbReference type="InterPro" id="IPR023799">
    <property type="entry name" value="RbfA_dom_sf"/>
</dbReference>
<dbReference type="InterPro" id="IPR020053">
    <property type="entry name" value="Ribosome-bd_factorA_CS"/>
</dbReference>
<dbReference type="NCBIfam" id="TIGR00082">
    <property type="entry name" value="rbfA"/>
    <property type="match status" value="1"/>
</dbReference>
<dbReference type="PANTHER" id="PTHR33515">
    <property type="entry name" value="RIBOSOME-BINDING FACTOR A, CHLOROPLASTIC-RELATED"/>
    <property type="match status" value="1"/>
</dbReference>
<dbReference type="PANTHER" id="PTHR33515:SF1">
    <property type="entry name" value="RIBOSOME-BINDING FACTOR A, CHLOROPLASTIC-RELATED"/>
    <property type="match status" value="1"/>
</dbReference>
<dbReference type="Pfam" id="PF02033">
    <property type="entry name" value="RBFA"/>
    <property type="match status" value="1"/>
</dbReference>
<dbReference type="SUPFAM" id="SSF89919">
    <property type="entry name" value="Ribosome-binding factor A, RbfA"/>
    <property type="match status" value="1"/>
</dbReference>
<dbReference type="PROSITE" id="PS01319">
    <property type="entry name" value="RBFA"/>
    <property type="match status" value="1"/>
</dbReference>
<feature type="chain" id="PRO_0000321268" description="Ribosome-binding factor A">
    <location>
        <begin position="1"/>
        <end position="135"/>
    </location>
</feature>
<feature type="region of interest" description="Disordered" evidence="2">
    <location>
        <begin position="115"/>
        <end position="135"/>
    </location>
</feature>
<feature type="compositionally biased region" description="Basic and acidic residues" evidence="2">
    <location>
        <begin position="116"/>
        <end position="135"/>
    </location>
</feature>
<reference key="1">
    <citation type="submission" date="2007-08" db="EMBL/GenBank/DDBJ databases">
        <authorList>
            <consortium name="The Vibrio harveyi Genome Sequencing Project"/>
            <person name="Bassler B."/>
            <person name="Clifton S.W."/>
            <person name="Fulton L."/>
            <person name="Delehaunty K."/>
            <person name="Fronick C."/>
            <person name="Harrison M."/>
            <person name="Markivic C."/>
            <person name="Fulton R."/>
            <person name="Tin-Wollam A.-M."/>
            <person name="Shah N."/>
            <person name="Pepin K."/>
            <person name="Nash W."/>
            <person name="Thiruvilangam P."/>
            <person name="Bhonagiri V."/>
            <person name="Waters C."/>
            <person name="Tu K.C."/>
            <person name="Irgon J."/>
            <person name="Wilson R.K."/>
        </authorList>
    </citation>
    <scope>NUCLEOTIDE SEQUENCE [LARGE SCALE GENOMIC DNA]</scope>
    <source>
        <strain>ATCC BAA-1116 / BB120</strain>
    </source>
</reference>
<name>RBFA_VIBC1</name>
<evidence type="ECO:0000255" key="1">
    <source>
        <dbReference type="HAMAP-Rule" id="MF_00003"/>
    </source>
</evidence>
<evidence type="ECO:0000256" key="2">
    <source>
        <dbReference type="SAM" id="MobiDB-lite"/>
    </source>
</evidence>
<evidence type="ECO:0000305" key="3"/>
<sequence length="135" mass="15740">MSKEFSRTQRVSQQLQKELAMILQREVRDSRLGMVTISDVEVSRDLAYAKVFVTFLCVGEQTPESCLAALREHEVHIRMMLGKRIRLRLTPEIRFYYDNTLVEGMRMSNLVSEVVNEDKRKQQDSGREEDQAGEE</sequence>
<comment type="function">
    <text evidence="1">One of several proteins that assist in the late maturation steps of the functional core of the 30S ribosomal subunit. Associates with free 30S ribosomal subunits (but not with 30S subunits that are part of 70S ribosomes or polysomes). Required for efficient processing of 16S rRNA. May interact with the 5'-terminal helix region of 16S rRNA.</text>
</comment>
<comment type="subunit">
    <text evidence="1">Monomer. Binds 30S ribosomal subunits, but not 50S ribosomal subunits or 70S ribosomes.</text>
</comment>
<comment type="subcellular location">
    <subcellularLocation>
        <location evidence="1">Cytoplasm</location>
    </subcellularLocation>
</comment>
<comment type="similarity">
    <text evidence="1">Belongs to the RbfA family.</text>
</comment>
<comment type="sequence caution" evidence="3">
    <conflict type="erroneous initiation">
        <sequence resource="EMBL-CDS" id="ABU72342"/>
    </conflict>
    <text>Extended N-terminus.</text>
</comment>
<gene>
    <name evidence="1" type="primary">rbfA</name>
    <name type="ordered locus">VIBHAR_03395</name>
</gene>
<accession>A7MZI4</accession>